<accession>Q965T6</accession>
<dbReference type="EMBL" id="BX284603">
    <property type="protein sequence ID" value="CCD73793.1"/>
    <property type="molecule type" value="Genomic_DNA"/>
</dbReference>
<dbReference type="RefSeq" id="NP_497178.1">
    <property type="nucleotide sequence ID" value="NM_064777.7"/>
</dbReference>
<dbReference type="SMR" id="Q965T6"/>
<dbReference type="ComplexPortal" id="CPX-1208">
    <property type="entry name" value="Kinesin II motor complex"/>
</dbReference>
<dbReference type="FunCoup" id="Q965T6">
    <property type="interactions" value="2119"/>
</dbReference>
<dbReference type="STRING" id="6239.Y50D7A.6.3"/>
<dbReference type="PaxDb" id="6239-Y50D7A.6"/>
<dbReference type="PeptideAtlas" id="Q965T6"/>
<dbReference type="EnsemblMetazoa" id="Y50D7A.6.1">
    <property type="protein sequence ID" value="Y50D7A.6.1"/>
    <property type="gene ID" value="WBGene00002230"/>
</dbReference>
<dbReference type="EnsemblMetazoa" id="Y50D7A.6.2">
    <property type="protein sequence ID" value="Y50D7A.6.2"/>
    <property type="gene ID" value="WBGene00002230"/>
</dbReference>
<dbReference type="EnsemblMetazoa" id="Y50D7A.6.3">
    <property type="protein sequence ID" value="Y50D7A.6.3"/>
    <property type="gene ID" value="WBGene00002230"/>
</dbReference>
<dbReference type="EnsemblMetazoa" id="Y50D7A.6.4">
    <property type="protein sequence ID" value="Y50D7A.6.4"/>
    <property type="gene ID" value="WBGene00002230"/>
</dbReference>
<dbReference type="GeneID" id="3565057"/>
<dbReference type="KEGG" id="cel:CELE_Y50D7A.6"/>
<dbReference type="UCSC" id="Y50D7A.6">
    <property type="organism name" value="c. elegans"/>
</dbReference>
<dbReference type="AGR" id="WB:WBGene00002230"/>
<dbReference type="CTD" id="3565057"/>
<dbReference type="WormBase" id="Y50D7A.6">
    <property type="protein sequence ID" value="CE26143"/>
    <property type="gene ID" value="WBGene00002230"/>
    <property type="gene designation" value="klp-20"/>
</dbReference>
<dbReference type="eggNOG" id="KOG4280">
    <property type="taxonomic scope" value="Eukaryota"/>
</dbReference>
<dbReference type="GeneTree" id="ENSGT00940000156386"/>
<dbReference type="HOGENOM" id="CLU_001485_22_3_1"/>
<dbReference type="InParanoid" id="Q965T6"/>
<dbReference type="OMA" id="NMRKHIE"/>
<dbReference type="OrthoDB" id="3176171at2759"/>
<dbReference type="PhylomeDB" id="Q965T6"/>
<dbReference type="Reactome" id="R-CEL-5620924">
    <property type="pathway name" value="Intraflagellar transport"/>
</dbReference>
<dbReference type="Reactome" id="R-CEL-6811434">
    <property type="pathway name" value="COPI-dependent Golgi-to-ER retrograde traffic"/>
</dbReference>
<dbReference type="Reactome" id="R-CEL-983189">
    <property type="pathway name" value="Kinesins"/>
</dbReference>
<dbReference type="PRO" id="PR:Q965T6"/>
<dbReference type="Proteomes" id="UP000001940">
    <property type="component" value="Chromosome III"/>
</dbReference>
<dbReference type="Bgee" id="WBGene00002230">
    <property type="expression patterns" value="Expressed in germ line (C elegans) and 4 other cell types or tissues"/>
</dbReference>
<dbReference type="GO" id="GO:1904115">
    <property type="term" value="C:axon cytoplasm"/>
    <property type="evidence" value="ECO:0007669"/>
    <property type="project" value="GOC"/>
</dbReference>
<dbReference type="GO" id="GO:0030993">
    <property type="term" value="C:axonemal heterotrimeric kinesin-II complex"/>
    <property type="evidence" value="ECO:0000353"/>
    <property type="project" value="WormBase"/>
</dbReference>
<dbReference type="GO" id="GO:0005737">
    <property type="term" value="C:cytoplasm"/>
    <property type="evidence" value="ECO:0000318"/>
    <property type="project" value="GO_Central"/>
</dbReference>
<dbReference type="GO" id="GO:0005871">
    <property type="term" value="C:kinesin complex"/>
    <property type="evidence" value="ECO:0000318"/>
    <property type="project" value="GO_Central"/>
</dbReference>
<dbReference type="GO" id="GO:0016939">
    <property type="term" value="C:kinesin II complex"/>
    <property type="evidence" value="ECO:0000303"/>
    <property type="project" value="ComplexPortal"/>
</dbReference>
<dbReference type="GO" id="GO:0005874">
    <property type="term" value="C:microtubule"/>
    <property type="evidence" value="ECO:0000318"/>
    <property type="project" value="GO_Central"/>
</dbReference>
<dbReference type="GO" id="GO:0005524">
    <property type="term" value="F:ATP binding"/>
    <property type="evidence" value="ECO:0007669"/>
    <property type="project" value="UniProtKB-KW"/>
</dbReference>
<dbReference type="GO" id="GO:0016887">
    <property type="term" value="F:ATP hydrolysis activity"/>
    <property type="evidence" value="ECO:0000318"/>
    <property type="project" value="GO_Central"/>
</dbReference>
<dbReference type="GO" id="GO:0008017">
    <property type="term" value="F:microtubule binding"/>
    <property type="evidence" value="ECO:0000318"/>
    <property type="project" value="GO_Central"/>
</dbReference>
<dbReference type="GO" id="GO:0003777">
    <property type="term" value="F:microtubule motor activity"/>
    <property type="evidence" value="ECO:0000314"/>
    <property type="project" value="WormBase"/>
</dbReference>
<dbReference type="GO" id="GO:0008089">
    <property type="term" value="P:anterograde axonal transport"/>
    <property type="evidence" value="ECO:0000318"/>
    <property type="project" value="GO_Central"/>
</dbReference>
<dbReference type="GO" id="GO:0060271">
    <property type="term" value="P:cilium assembly"/>
    <property type="evidence" value="ECO:0000318"/>
    <property type="project" value="GO_Central"/>
</dbReference>
<dbReference type="GO" id="GO:0035720">
    <property type="term" value="P:intraciliary anterograde transport"/>
    <property type="evidence" value="ECO:0000303"/>
    <property type="project" value="ComplexPortal"/>
</dbReference>
<dbReference type="GO" id="GO:0007018">
    <property type="term" value="P:microtubule-based movement"/>
    <property type="evidence" value="ECO:0000314"/>
    <property type="project" value="WormBase"/>
</dbReference>
<dbReference type="FunFam" id="3.40.850.10:FF:000029">
    <property type="entry name" value="Kinesin-like protein KIF17"/>
    <property type="match status" value="1"/>
</dbReference>
<dbReference type="Gene3D" id="3.40.850.10">
    <property type="entry name" value="Kinesin motor domain"/>
    <property type="match status" value="1"/>
</dbReference>
<dbReference type="InterPro" id="IPR027640">
    <property type="entry name" value="Kinesin-like_fam"/>
</dbReference>
<dbReference type="InterPro" id="IPR019821">
    <property type="entry name" value="Kinesin_motor_CS"/>
</dbReference>
<dbReference type="InterPro" id="IPR001752">
    <property type="entry name" value="Kinesin_motor_dom"/>
</dbReference>
<dbReference type="InterPro" id="IPR036961">
    <property type="entry name" value="Kinesin_motor_dom_sf"/>
</dbReference>
<dbReference type="InterPro" id="IPR027417">
    <property type="entry name" value="P-loop_NTPase"/>
</dbReference>
<dbReference type="PANTHER" id="PTHR47969">
    <property type="entry name" value="CHROMOSOME-ASSOCIATED KINESIN KIF4A-RELATED"/>
    <property type="match status" value="1"/>
</dbReference>
<dbReference type="PANTHER" id="PTHR47969:SF21">
    <property type="entry name" value="KINESIN-LIKE PROTEIN"/>
    <property type="match status" value="1"/>
</dbReference>
<dbReference type="Pfam" id="PF00225">
    <property type="entry name" value="Kinesin"/>
    <property type="match status" value="1"/>
</dbReference>
<dbReference type="PRINTS" id="PR00380">
    <property type="entry name" value="KINESINHEAVY"/>
</dbReference>
<dbReference type="SMART" id="SM00129">
    <property type="entry name" value="KISc"/>
    <property type="match status" value="1"/>
</dbReference>
<dbReference type="SUPFAM" id="SSF52540">
    <property type="entry name" value="P-loop containing nucleoside triphosphate hydrolases"/>
    <property type="match status" value="1"/>
</dbReference>
<dbReference type="PROSITE" id="PS00411">
    <property type="entry name" value="KINESIN_MOTOR_1"/>
    <property type="match status" value="1"/>
</dbReference>
<dbReference type="PROSITE" id="PS50067">
    <property type="entry name" value="KINESIN_MOTOR_2"/>
    <property type="match status" value="1"/>
</dbReference>
<keyword id="KW-0067">ATP-binding</keyword>
<keyword id="KW-0966">Cell projection</keyword>
<keyword id="KW-0969">Cilium</keyword>
<keyword id="KW-0175">Coiled coil</keyword>
<keyword id="KW-0963">Cytoplasm</keyword>
<keyword id="KW-0206">Cytoskeleton</keyword>
<keyword id="KW-0493">Microtubule</keyword>
<keyword id="KW-0505">Motor protein</keyword>
<keyword id="KW-0547">Nucleotide-binding</keyword>
<keyword id="KW-1185">Reference proteome</keyword>
<name>KLP20_CAEEL</name>
<evidence type="ECO:0000255" key="1"/>
<evidence type="ECO:0000255" key="2">
    <source>
        <dbReference type="PROSITE-ProRule" id="PRU00283"/>
    </source>
</evidence>
<evidence type="ECO:0000256" key="3">
    <source>
        <dbReference type="SAM" id="MobiDB-lite"/>
    </source>
</evidence>
<evidence type="ECO:0000269" key="4">
    <source>
    </source>
</evidence>
<evidence type="ECO:0000269" key="5">
    <source>
    </source>
</evidence>
<evidence type="ECO:0000269" key="6">
    <source>
    </source>
</evidence>
<evidence type="ECO:0000269" key="7">
    <source>
    </source>
</evidence>
<evidence type="ECO:0000269" key="8">
    <source>
    </source>
</evidence>
<evidence type="ECO:0000305" key="9"/>
<evidence type="ECO:0000305" key="10">
    <source>
    </source>
</evidence>
<evidence type="ECO:0000312" key="11">
    <source>
        <dbReference type="Proteomes" id="UP000001940"/>
    </source>
</evidence>
<evidence type="ECO:0000312" key="12">
    <source>
        <dbReference type="WormBase" id="Y50D7A.6"/>
    </source>
</evidence>
<reference evidence="11" key="1">
    <citation type="journal article" date="1998" name="Science">
        <title>Genome sequence of the nematode C. elegans: a platform for investigating biology.</title>
        <authorList>
            <consortium name="The C. elegans sequencing consortium"/>
        </authorList>
    </citation>
    <scope>NUCLEOTIDE SEQUENCE [LARGE SCALE GENOMIC DNA]</scope>
    <source>
        <strain evidence="11">Bristol N2</strain>
    </source>
</reference>
<reference evidence="9" key="2">
    <citation type="journal article" date="2006" name="J. Cell Biol.">
        <title>Mechanism of transport of IFT particles in C. elegans cilia by the concerted action of kinesin-II and OSM-3 motors.</title>
        <authorList>
            <person name="Pan X."/>
            <person name="Ou G."/>
            <person name="Civelekoglu-Scholey G."/>
            <person name="Blacque O.E."/>
            <person name="Endres N.F."/>
            <person name="Tao L."/>
            <person name="Mogilner A."/>
            <person name="Leroux M.R."/>
            <person name="Vale R.D."/>
            <person name="Scholey J.M."/>
        </authorList>
    </citation>
    <scope>FUNCTION</scope>
    <scope>IDENTIFICATION IN KINESIN II MOTOR COMPLEX</scope>
    <scope>SUBUNIT</scope>
</reference>
<reference evidence="9" key="3">
    <citation type="journal article" date="2010" name="Biochem. Biophys. Res. Commun.">
        <title>Torque generation by one of the motor subunits of heterotrimeric kinesin-2.</title>
        <authorList>
            <person name="Pan X."/>
            <person name="Acar S."/>
            <person name="Scholey J.M."/>
        </authorList>
    </citation>
    <scope>FUNCTION</scope>
    <scope>IDENTIFICATION IN KINESIN II MOTOR COMPLEX</scope>
</reference>
<reference evidence="9" key="4">
    <citation type="journal article" date="2010" name="Proc. Natl. Acad. Sci. U.S.A.">
        <title>Regulation of a heterodimeric kinesin-2 through an unprocessive motor domain that is turned processive by its partner.</title>
        <authorList>
            <person name="Brunnbauer M."/>
            <person name="Mueller-Planitz F."/>
            <person name="Koesem S."/>
            <person name="Ho T.H."/>
            <person name="Dombi R."/>
            <person name="Gebhardt J.C."/>
            <person name="Rief M."/>
            <person name="Okten Z."/>
        </authorList>
    </citation>
    <scope>FUNCTION</scope>
    <scope>IDENTIFICATION IN KINESIN II MOTOR COMPLEX</scope>
    <scope>SUBUNIT</scope>
</reference>
<reference evidence="9" key="5">
    <citation type="journal article" date="2011" name="Mol. Biol. Cell">
        <title>How kinesin-2 forms a stalk.</title>
        <authorList>
            <person name="Vukajlovic M."/>
            <person name="Dietz H."/>
            <person name="Schliwa M."/>
            <person name="Oekten Z."/>
        </authorList>
    </citation>
    <scope>INTERACTION WITH KLP-11</scope>
</reference>
<reference evidence="9" key="6">
    <citation type="journal article" date="2017" name="Curr. Biol.">
        <title>Dynein-driven retrograde intraflagellar transport is triphasic in C. elegans sensory cilia.</title>
        <authorList>
            <person name="Yi P."/>
            <person name="Li W.J."/>
            <person name="Dong M.Q."/>
            <person name="Ou G."/>
        </authorList>
    </citation>
    <scope>FUNCTION</scope>
    <scope>IDENTIFICATION IN KINESIN II MOTOR COMPLEX</scope>
    <scope>SUBCELLULAR LOCATION</scope>
    <scope>IDENTIFICATION BY MASS SPECTROMETRY</scope>
</reference>
<proteinExistence type="evidence at protein level"/>
<organism evidence="11">
    <name type="scientific">Caenorhabditis elegans</name>
    <dbReference type="NCBI Taxonomy" id="6239"/>
    <lineage>
        <taxon>Eukaryota</taxon>
        <taxon>Metazoa</taxon>
        <taxon>Ecdysozoa</taxon>
        <taxon>Nematoda</taxon>
        <taxon>Chromadorea</taxon>
        <taxon>Rhabditida</taxon>
        <taxon>Rhabditina</taxon>
        <taxon>Rhabditomorpha</taxon>
        <taxon>Rhabditoidea</taxon>
        <taxon>Rhabditidae</taxon>
        <taxon>Peloderinae</taxon>
        <taxon>Caenorhabditis</taxon>
    </lineage>
</organism>
<sequence length="646" mass="73537">MEGAEKVKVVVRCRPISTTEKLQGHKIAVTCNDEEKAVNIKSLSQEDPPRTFYFDAVFSPNTDQMTVYNVAARPIVENVLKGYNGTIFAYGQTGTGKTFTMAGDLEPVEMRGIIPNSFAHIFDHIAKCQHDTTFLVRVSYLEIYNEEIRDLLSKDHNGNLEIKERPDVGVYVRNLSNPTVENASKMQALMEFGSKNRKVGATAMNLESSRSHAMFTVTIESCRNGLVTQGKLQLVDLAGSERQSKTGAQGERLKEAAKINLSLSTLGNVISSLVDGKSTHIPYRNSKLTRLLQDSLGGNSKTVMIANVGPATYNYDETLSTLRYANRAKNIQNVAKINEDPKDAQLRKFQLEIEALRKILDEENPGDDENQEEAWEAKMQEREVEMEKKRKILEERVNSAVNDEETHRLVKEMMENEAELKKARSEHEKLRSKLEKIEKKLIVGGENLLEKVEEQAKLLEVNNKELEQSKFQEAHLRTQLEERTAVKVEIEERYSSLQEEAFVKSKKIKKVSNELKDARAELKDLEEDHQRQVEAMLDDIRQLRKELLLNIAIIDEYIPVEHVELIEKYVSWSEEHGDWQLKAIAYTGNNMRASAPPAKKEFSNNNQTVPMYYSYRADLGASTAEHRPRTSSKKHRASIRLQQLLT</sequence>
<protein>
    <recommendedName>
        <fullName evidence="9">Kinesin-like protein klp-20</fullName>
    </recommendedName>
</protein>
<gene>
    <name evidence="12" type="primary">klp-20</name>
    <name evidence="12" type="ORF">Y50D7A.6</name>
</gene>
<comment type="function">
    <text evidence="4 5 6 8">Component of the kinesin II motor complex (composed of kap-1 and the heterodimeric motor proteins klp-11 and klp-20) which is required for intraflagellar transport (IFT) (PubMed:20498083, PubMed:20833139). Heterodimerizes with klp-11 to form a 'processive' molecular motor upon IFT cargo binding, which, within the kinesin II motor complex, binds to and moves along microtubules in a unidirectional manner (without dissociation of the heterodimer), and in turn, is responsible for the IFT of cargo (PubMed:20498083). Specifically, the kinesin II motor complex, together with the kinesin motor protein osm-3 moves along microtubules and is required for anterograde IFT along the middle segment of the sensory neuron cilia (PubMed:17000880, PubMed:20833139, PubMed:28479320). In particular, the kinesin II motor complex delivers specific ciliary cargo proteins such as che-3 which are related to motility to ciliary tips (PubMed:28479320). This is likely mediated by IFT complexes A and B (PubMed:28479320).</text>
</comment>
<comment type="subunit">
    <text evidence="4 5 7 8 10">Component of the kinesin II motor complex, a heterotrimeric complex composed of kap-1, klp-11 and klp-20 (PubMed:17000880, PubMed:20498083, PubMed:20833139, PubMed:28479320). Interacts (via C-terminus) with klp-11 (via C-terminus) to form a heterodimer (PubMed:20498083, PubMed:21917588). Furthermore, within the heterodimer, the C-termini of klp-20 and klp-11 interact to form a coiled coil (stalk) or tail domain, and this is necessary for association with kap-1, and kinesin II motor complex activity upon IFT cargo binding (PubMed:20498083, PubMed:21917588). Prior to cargo binding, the klp-11/klp-20 heterodimer is autoinhibited by the tail domain of the heterodimer, which folds onto the kinesin motor domain (PubMed:20498083). Cargo binding to the heterodimer relieves the autoinhibition, and allows for an extended conformation of the tail domain, and function of the heterodimer (PubMed:20498083).</text>
</comment>
<comment type="subcellular location">
    <subcellularLocation>
        <location evidence="8">Cell projection</location>
        <location evidence="8">Cilium</location>
    </subcellularLocation>
    <subcellularLocation>
        <location evidence="9">Cytoplasm</location>
        <location evidence="9">Cytoskeleton</location>
    </subcellularLocation>
    <text evidence="8">In particular, localizes to the base and transition zone of cilia.</text>
</comment>
<comment type="similarity">
    <text evidence="2">Belongs to the TRAFAC class myosin-kinesin ATPase superfamily. Kinesin family. Kinesin II subfamily.</text>
</comment>
<feature type="chain" id="PRO_0000442219" description="Kinesin-like protein klp-20" evidence="9">
    <location>
        <begin position="1"/>
        <end position="646"/>
    </location>
</feature>
<feature type="domain" description="Kinesin motor" evidence="2">
    <location>
        <begin position="6"/>
        <end position="331"/>
    </location>
</feature>
<feature type="region of interest" description="Interaction with klp-11" evidence="7">
    <location>
        <begin position="525"/>
        <end position="550"/>
    </location>
</feature>
<feature type="region of interest" description="Disordered" evidence="3">
    <location>
        <begin position="623"/>
        <end position="646"/>
    </location>
</feature>
<feature type="coiled-coil region" evidence="1">
    <location>
        <begin position="342"/>
        <end position="552"/>
    </location>
</feature>
<feature type="compositionally biased region" description="Basic residues" evidence="3">
    <location>
        <begin position="629"/>
        <end position="638"/>
    </location>
</feature>
<feature type="binding site" evidence="2">
    <location>
        <begin position="91"/>
        <end position="98"/>
    </location>
    <ligand>
        <name>ATP</name>
        <dbReference type="ChEBI" id="CHEBI:30616"/>
    </ligand>
</feature>
<feature type="site" description="May be required for autoinhibition within the klp-11/klp-20 heterodimer" evidence="5">
    <location>
        <position position="444"/>
    </location>
</feature>
<feature type="site" description="May be required for autoinhibition within the klp-11/klp-20 heterodimer" evidence="5">
    <location>
        <position position="445"/>
    </location>
</feature>